<keyword id="KW-0106">Calcium</keyword>
<keyword id="KW-0903">Direct protein sequencing</keyword>
<keyword id="KW-1015">Disulfide bond</keyword>
<keyword id="KW-0378">Hydrolase</keyword>
<keyword id="KW-0442">Lipid degradation</keyword>
<keyword id="KW-0443">Lipid metabolism</keyword>
<keyword id="KW-0479">Metal-binding</keyword>
<keyword id="KW-1185">Reference proteome</keyword>
<keyword id="KW-0964">Secreted</keyword>
<dbReference type="EC" id="3.1.1.4"/>
<dbReference type="PIR" id="A00735">
    <property type="entry name" value="PSPGA2"/>
</dbReference>
<dbReference type="SMR" id="P04416"/>
<dbReference type="FunCoup" id="P04416">
    <property type="interactions" value="440"/>
</dbReference>
<dbReference type="ChEMBL" id="CHEMBL2366566"/>
<dbReference type="HOGENOM" id="CLU_090683_1_1_1"/>
<dbReference type="InParanoid" id="P04416"/>
<dbReference type="Proteomes" id="UP000008227">
    <property type="component" value="Unplaced"/>
</dbReference>
<dbReference type="Proteomes" id="UP000314985">
    <property type="component" value="Unplaced"/>
</dbReference>
<dbReference type="Proteomes" id="UP000694570">
    <property type="component" value="Unplaced"/>
</dbReference>
<dbReference type="Proteomes" id="UP000694571">
    <property type="component" value="Unplaced"/>
</dbReference>
<dbReference type="Proteomes" id="UP000694720">
    <property type="component" value="Unplaced"/>
</dbReference>
<dbReference type="Proteomes" id="UP000694722">
    <property type="component" value="Unplaced"/>
</dbReference>
<dbReference type="Proteomes" id="UP000694723">
    <property type="component" value="Unplaced"/>
</dbReference>
<dbReference type="Proteomes" id="UP000694724">
    <property type="component" value="Unplaced"/>
</dbReference>
<dbReference type="Proteomes" id="UP000694725">
    <property type="component" value="Unplaced"/>
</dbReference>
<dbReference type="Proteomes" id="UP000694726">
    <property type="component" value="Unplaced"/>
</dbReference>
<dbReference type="Proteomes" id="UP000694727">
    <property type="component" value="Unplaced"/>
</dbReference>
<dbReference type="Proteomes" id="UP000694728">
    <property type="component" value="Unplaced"/>
</dbReference>
<dbReference type="GO" id="GO:0005576">
    <property type="term" value="C:extracellular region"/>
    <property type="evidence" value="ECO:0007669"/>
    <property type="project" value="UniProtKB-SubCell"/>
</dbReference>
<dbReference type="GO" id="GO:0005509">
    <property type="term" value="F:calcium ion binding"/>
    <property type="evidence" value="ECO:0000318"/>
    <property type="project" value="GO_Central"/>
</dbReference>
<dbReference type="GO" id="GO:0047498">
    <property type="term" value="F:calcium-dependent phospholipase A2 activity"/>
    <property type="evidence" value="ECO:0000318"/>
    <property type="project" value="GO_Central"/>
</dbReference>
<dbReference type="GO" id="GO:0005543">
    <property type="term" value="F:phospholipid binding"/>
    <property type="evidence" value="ECO:0000318"/>
    <property type="project" value="GO_Central"/>
</dbReference>
<dbReference type="GO" id="GO:0005102">
    <property type="term" value="F:signaling receptor binding"/>
    <property type="evidence" value="ECO:0000318"/>
    <property type="project" value="GO_Central"/>
</dbReference>
<dbReference type="GO" id="GO:0050482">
    <property type="term" value="P:arachidonate secretion"/>
    <property type="evidence" value="ECO:0007669"/>
    <property type="project" value="InterPro"/>
</dbReference>
<dbReference type="GO" id="GO:0016042">
    <property type="term" value="P:lipid catabolic process"/>
    <property type="evidence" value="ECO:0007669"/>
    <property type="project" value="UniProtKB-KW"/>
</dbReference>
<dbReference type="GO" id="GO:0046470">
    <property type="term" value="P:phosphatidylcholine metabolic process"/>
    <property type="evidence" value="ECO:0000318"/>
    <property type="project" value="GO_Central"/>
</dbReference>
<dbReference type="GO" id="GO:0046471">
    <property type="term" value="P:phosphatidylglycerol metabolic process"/>
    <property type="evidence" value="ECO:0000318"/>
    <property type="project" value="GO_Central"/>
</dbReference>
<dbReference type="CDD" id="cd00125">
    <property type="entry name" value="PLA2c"/>
    <property type="match status" value="1"/>
</dbReference>
<dbReference type="FunFam" id="1.20.90.10:FF:000011">
    <property type="entry name" value="Phospholipase A(2)"/>
    <property type="match status" value="1"/>
</dbReference>
<dbReference type="Gene3D" id="1.20.90.10">
    <property type="entry name" value="Phospholipase A2 domain"/>
    <property type="match status" value="1"/>
</dbReference>
<dbReference type="InterPro" id="IPR001211">
    <property type="entry name" value="PLipase_A2"/>
</dbReference>
<dbReference type="InterPro" id="IPR033112">
    <property type="entry name" value="PLipase_A2_Asp_AS"/>
</dbReference>
<dbReference type="InterPro" id="IPR016090">
    <property type="entry name" value="PLipase_A2_dom"/>
</dbReference>
<dbReference type="InterPro" id="IPR036444">
    <property type="entry name" value="PLipase_A2_dom_sf"/>
</dbReference>
<dbReference type="InterPro" id="IPR033113">
    <property type="entry name" value="PLipase_A2_His_AS"/>
</dbReference>
<dbReference type="PANTHER" id="PTHR11716:SF94">
    <property type="entry name" value="PHOSPHOLIPASE A2"/>
    <property type="match status" value="1"/>
</dbReference>
<dbReference type="PANTHER" id="PTHR11716">
    <property type="entry name" value="PHOSPHOLIPASE A2 FAMILY MEMBER"/>
    <property type="match status" value="1"/>
</dbReference>
<dbReference type="Pfam" id="PF00068">
    <property type="entry name" value="Phospholip_A2_1"/>
    <property type="match status" value="1"/>
</dbReference>
<dbReference type="PRINTS" id="PR00389">
    <property type="entry name" value="PHPHLIPASEA2"/>
</dbReference>
<dbReference type="SMART" id="SM00085">
    <property type="entry name" value="PA2c"/>
    <property type="match status" value="1"/>
</dbReference>
<dbReference type="SUPFAM" id="SSF48619">
    <property type="entry name" value="Phospholipase A2, PLA2"/>
    <property type="match status" value="1"/>
</dbReference>
<dbReference type="PROSITE" id="PS00119">
    <property type="entry name" value="PA2_ASP"/>
    <property type="match status" value="1"/>
</dbReference>
<dbReference type="PROSITE" id="PS00118">
    <property type="entry name" value="PA2_HIS"/>
    <property type="match status" value="1"/>
</dbReference>
<comment type="function">
    <text>PA2 catalyzes the calcium-dependent hydrolysis of the 2-acyl groups in 3-sn-phosphoglycerides.</text>
</comment>
<comment type="catalytic activity">
    <reaction evidence="2 3">
        <text>a 1,2-diacyl-sn-glycero-3-phosphocholine + H2O = a 1-acyl-sn-glycero-3-phosphocholine + a fatty acid + H(+)</text>
        <dbReference type="Rhea" id="RHEA:15801"/>
        <dbReference type="ChEBI" id="CHEBI:15377"/>
        <dbReference type="ChEBI" id="CHEBI:15378"/>
        <dbReference type="ChEBI" id="CHEBI:28868"/>
        <dbReference type="ChEBI" id="CHEBI:57643"/>
        <dbReference type="ChEBI" id="CHEBI:58168"/>
        <dbReference type="EC" id="3.1.1.4"/>
    </reaction>
</comment>
<comment type="cofactor">
    <cofactor evidence="1">
        <name>Ca(2+)</name>
        <dbReference type="ChEBI" id="CHEBI:29108"/>
    </cofactor>
    <text evidence="1">Binds 1 Ca(2+) ion per subunit.</text>
</comment>
<comment type="subcellular location">
    <subcellularLocation>
        <location>Secreted</location>
    </subcellularLocation>
</comment>
<comment type="miscellaneous">
    <text>This isozyme constitutes about 5% of the pancreatic phospholipase.</text>
</comment>
<comment type="similarity">
    <text evidence="4">Belongs to the phospholipase A2 family.</text>
</comment>
<name>PA22_PIG</name>
<evidence type="ECO:0000250" key="1"/>
<evidence type="ECO:0000255" key="2">
    <source>
        <dbReference type="PROSITE-ProRule" id="PRU10035"/>
    </source>
</evidence>
<evidence type="ECO:0000255" key="3">
    <source>
        <dbReference type="PROSITE-ProRule" id="PRU10036"/>
    </source>
</evidence>
<evidence type="ECO:0000305" key="4"/>
<accession>P04416</accession>
<sequence>ALWQFRSMIKCTIPGSDPLLDFNNYGCYCGLGGSGTPVDELDRCCETHDNCYRDAKNLDSCKFLVDNPYTNSYSYSCSNTEITCNSKNNACEAFICNCDRNAAICFSKAPYNKEHKNLDTKKYC</sequence>
<protein>
    <recommendedName>
        <fullName>Phospholipase A2, minor isoenzyme</fullName>
        <ecNumber>3.1.1.4</ecNumber>
    </recommendedName>
    <alternativeName>
        <fullName>Phosphatidylcholine 2-acylhydrolase</fullName>
    </alternativeName>
</protein>
<reference key="1">
    <citation type="journal article" date="1979" name="Biochim. Biophys. Acta">
        <title>The amino acid sequence of the phospholipase A2 isoenzyme from porcine pancreas.</title>
        <authorList>
            <person name="Puijk W.C."/>
            <person name="Verheij H.M."/>
            <person name="Wietzes P."/>
            <person name="de Haas G.H."/>
        </authorList>
    </citation>
    <scope>PRELIMINARY PROTEIN SEQUENCE</scope>
</reference>
<proteinExistence type="evidence at protein level"/>
<feature type="chain" id="PRO_0000161587" description="Phospholipase A2, minor isoenzyme">
    <location>
        <begin position="1"/>
        <end position="124"/>
    </location>
</feature>
<feature type="active site">
    <location>
        <position position="48"/>
    </location>
</feature>
<feature type="active site">
    <location>
        <position position="99"/>
    </location>
</feature>
<feature type="binding site" evidence="1">
    <location>
        <position position="28"/>
    </location>
    <ligand>
        <name>Ca(2+)</name>
        <dbReference type="ChEBI" id="CHEBI:29108"/>
    </ligand>
</feature>
<feature type="binding site" evidence="1">
    <location>
        <position position="30"/>
    </location>
    <ligand>
        <name>Ca(2+)</name>
        <dbReference type="ChEBI" id="CHEBI:29108"/>
    </ligand>
</feature>
<feature type="binding site" evidence="1">
    <location>
        <position position="32"/>
    </location>
    <ligand>
        <name>Ca(2+)</name>
        <dbReference type="ChEBI" id="CHEBI:29108"/>
    </ligand>
</feature>
<feature type="binding site" evidence="1">
    <location>
        <position position="49"/>
    </location>
    <ligand>
        <name>Ca(2+)</name>
        <dbReference type="ChEBI" id="CHEBI:29108"/>
    </ligand>
</feature>
<feature type="disulfide bond">
    <location>
        <begin position="11"/>
        <end position="77"/>
    </location>
</feature>
<feature type="disulfide bond">
    <location>
        <begin position="27"/>
        <end position="124"/>
    </location>
</feature>
<feature type="disulfide bond">
    <location>
        <begin position="29"/>
        <end position="45"/>
    </location>
</feature>
<feature type="disulfide bond">
    <location>
        <begin position="44"/>
        <end position="105"/>
    </location>
</feature>
<feature type="disulfide bond">
    <location>
        <begin position="51"/>
        <end position="98"/>
    </location>
</feature>
<feature type="disulfide bond">
    <location>
        <begin position="61"/>
        <end position="91"/>
    </location>
</feature>
<feature type="disulfide bond">
    <location>
        <begin position="84"/>
        <end position="96"/>
    </location>
</feature>
<organism>
    <name type="scientific">Sus scrofa</name>
    <name type="common">Pig</name>
    <dbReference type="NCBI Taxonomy" id="9823"/>
    <lineage>
        <taxon>Eukaryota</taxon>
        <taxon>Metazoa</taxon>
        <taxon>Chordata</taxon>
        <taxon>Craniata</taxon>
        <taxon>Vertebrata</taxon>
        <taxon>Euteleostomi</taxon>
        <taxon>Mammalia</taxon>
        <taxon>Eutheria</taxon>
        <taxon>Laurasiatheria</taxon>
        <taxon>Artiodactyla</taxon>
        <taxon>Suina</taxon>
        <taxon>Suidae</taxon>
        <taxon>Sus</taxon>
    </lineage>
</organism>